<gene>
    <name evidence="1" type="primary">purL</name>
    <name type="ordered locus">VNG_0864G</name>
</gene>
<evidence type="ECO:0000255" key="1">
    <source>
        <dbReference type="HAMAP-Rule" id="MF_00420"/>
    </source>
</evidence>
<proteinExistence type="inferred from homology"/>
<sequence>MSLGDSDRERVVAALGRDPTPAEAALFENLWSEHCAYRSSRSLLSAFDSDSEAVVVGPGDDAAVVRVPGTDQLVTVGVESHNHPSYVDPYDGAATGVGGIVRDTLSMGAYPIALADALYFGDFDDEHARYLLDGVVEGISDYGNAIGVPTVAGATQFHDGYTGNPLVNVACVGLVTEDRLVTAAAKSPGNKLVLVGNATGRDGLGGASFASEDLAEDAETADRPAVQVGDPYTEKLLIEANETLLDRDLVVAARDLGAAGLGGASSEMVAQGELGARITLDAVHQREPEMNAMEILLAESQERMCYEVAPADVDAVREVATRYDLGCSVIGEVTTGNYVCEFDGETVVDAPATVLADGAPATDQPSTVPQAPATDRPDPALGTAIDAVLSAPNTASNEWVYRQYDHEVGARTVQRPGEDAAGLALHEADDGTTVALSAGANPGWTACQPYAGAYATAVENATNLAAAGAEPLAAVDCLNGGNPEDPDVYGGFEAMVAGLADGCRAIDTPVVGGNVSLYNDSATGPIAPTPTLAVVGYRDQHPVPGSGLAGDGDLVLVGGHADGLGGSVYLQALGGTDQFPAADAAGVDAVREAATRADTLAVHDISDGGLAVTLAEMVTADAGATVTVPGLAALFSECPGRAVVETRDADALQAALDVPVVRLGSATTDGTLSVTVDDETVTRDAATIRDHRGVIARELD</sequence>
<keyword id="KW-0067">ATP-binding</keyword>
<keyword id="KW-0963">Cytoplasm</keyword>
<keyword id="KW-0436">Ligase</keyword>
<keyword id="KW-0460">Magnesium</keyword>
<keyword id="KW-0479">Metal-binding</keyword>
<keyword id="KW-0547">Nucleotide-binding</keyword>
<keyword id="KW-0658">Purine biosynthesis</keyword>
<keyword id="KW-1185">Reference proteome</keyword>
<reference key="1">
    <citation type="journal article" date="2000" name="Proc. Natl. Acad. Sci. U.S.A.">
        <title>Genome sequence of Halobacterium species NRC-1.</title>
        <authorList>
            <person name="Ng W.V."/>
            <person name="Kennedy S.P."/>
            <person name="Mahairas G.G."/>
            <person name="Berquist B."/>
            <person name="Pan M."/>
            <person name="Shukla H.D."/>
            <person name="Lasky S.R."/>
            <person name="Baliga N.S."/>
            <person name="Thorsson V."/>
            <person name="Sbrogna J."/>
            <person name="Swartzell S."/>
            <person name="Weir D."/>
            <person name="Hall J."/>
            <person name="Dahl T.A."/>
            <person name="Welti R."/>
            <person name="Goo Y.A."/>
            <person name="Leithauser B."/>
            <person name="Keller K."/>
            <person name="Cruz R."/>
            <person name="Danson M.J."/>
            <person name="Hough D.W."/>
            <person name="Maddocks D.G."/>
            <person name="Jablonski P.E."/>
            <person name="Krebs M.P."/>
            <person name="Angevine C.M."/>
            <person name="Dale H."/>
            <person name="Isenbarger T.A."/>
            <person name="Peck R.F."/>
            <person name="Pohlschroder M."/>
            <person name="Spudich J.L."/>
            <person name="Jung K.-H."/>
            <person name="Alam M."/>
            <person name="Freitas T."/>
            <person name="Hou S."/>
            <person name="Daniels C.J."/>
            <person name="Dennis P.P."/>
            <person name="Omer A.D."/>
            <person name="Ebhardt H."/>
            <person name="Lowe T.M."/>
            <person name="Liang P."/>
            <person name="Riley M."/>
            <person name="Hood L."/>
            <person name="DasSarma S."/>
        </authorList>
    </citation>
    <scope>NUCLEOTIDE SEQUENCE [LARGE SCALE GENOMIC DNA]</scope>
    <source>
        <strain>ATCC 700922 / JCM 11081 / NRC-1</strain>
    </source>
</reference>
<accession>Q9HR49</accession>
<name>PURL_HALSA</name>
<organism>
    <name type="scientific">Halobacterium salinarum (strain ATCC 700922 / JCM 11081 / NRC-1)</name>
    <name type="common">Halobacterium halobium</name>
    <dbReference type="NCBI Taxonomy" id="64091"/>
    <lineage>
        <taxon>Archaea</taxon>
        <taxon>Methanobacteriati</taxon>
        <taxon>Methanobacteriota</taxon>
        <taxon>Stenosarchaea group</taxon>
        <taxon>Halobacteria</taxon>
        <taxon>Halobacteriales</taxon>
        <taxon>Halobacteriaceae</taxon>
        <taxon>Halobacterium</taxon>
        <taxon>Halobacterium salinarum NRC-34001</taxon>
    </lineage>
</organism>
<feature type="chain" id="PRO_0000100511" description="Phosphoribosylformylglycinamidine synthase subunit PurL">
    <location>
        <begin position="1"/>
        <end position="700"/>
    </location>
</feature>
<feature type="active site" evidence="1">
    <location>
        <position position="34"/>
    </location>
</feature>
<feature type="active site" description="Proton acceptor" evidence="1">
    <location>
        <position position="81"/>
    </location>
</feature>
<feature type="binding site" evidence="1">
    <location>
        <position position="37"/>
    </location>
    <ligand>
        <name>ATP</name>
        <dbReference type="ChEBI" id="CHEBI:30616"/>
    </ligand>
</feature>
<feature type="binding site" evidence="1">
    <location>
        <position position="79"/>
    </location>
    <ligand>
        <name>Mg(2+)</name>
        <dbReference type="ChEBI" id="CHEBI:18420"/>
        <label>1</label>
    </ligand>
</feature>
<feature type="binding site" evidence="1">
    <location>
        <begin position="80"/>
        <end position="83"/>
    </location>
    <ligand>
        <name>substrate</name>
    </ligand>
</feature>
<feature type="binding site" evidence="1">
    <location>
        <position position="102"/>
    </location>
    <ligand>
        <name>substrate</name>
    </ligand>
</feature>
<feature type="binding site" evidence="1">
    <location>
        <position position="103"/>
    </location>
    <ligand>
        <name>Mg(2+)</name>
        <dbReference type="ChEBI" id="CHEBI:18420"/>
        <label>2</label>
    </ligand>
</feature>
<feature type="binding site" evidence="1">
    <location>
        <position position="227"/>
    </location>
    <ligand>
        <name>substrate</name>
    </ligand>
</feature>
<feature type="binding site" evidence="1">
    <location>
        <position position="255"/>
    </location>
    <ligand>
        <name>Mg(2+)</name>
        <dbReference type="ChEBI" id="CHEBI:18420"/>
        <label>2</label>
    </ligand>
</feature>
<feature type="binding site" evidence="1">
    <location>
        <begin position="299"/>
        <end position="301"/>
    </location>
    <ligand>
        <name>substrate</name>
    </ligand>
</feature>
<feature type="binding site" evidence="1">
    <location>
        <position position="476"/>
    </location>
    <ligand>
        <name>ATP</name>
        <dbReference type="ChEBI" id="CHEBI:30616"/>
    </ligand>
</feature>
<feature type="binding site" evidence="1">
    <location>
        <position position="513"/>
    </location>
    <ligand>
        <name>ATP</name>
        <dbReference type="ChEBI" id="CHEBI:30616"/>
    </ligand>
</feature>
<feature type="binding site" evidence="1">
    <location>
        <position position="514"/>
    </location>
    <ligand>
        <name>Mg(2+)</name>
        <dbReference type="ChEBI" id="CHEBI:18420"/>
        <label>1</label>
    </ligand>
</feature>
<feature type="binding site" evidence="1">
    <location>
        <position position="516"/>
    </location>
    <ligand>
        <name>substrate</name>
    </ligand>
</feature>
<protein>
    <recommendedName>
        <fullName evidence="1">Phosphoribosylformylglycinamidine synthase subunit PurL</fullName>
        <shortName evidence="1">FGAM synthase</shortName>
        <ecNumber evidence="1">6.3.5.3</ecNumber>
    </recommendedName>
    <alternativeName>
        <fullName evidence="1">Formylglycinamide ribonucleotide amidotransferase subunit II</fullName>
        <shortName evidence="1">FGAR amidotransferase II</shortName>
        <shortName evidence="1">FGAR-AT II</shortName>
    </alternativeName>
    <alternativeName>
        <fullName evidence="1">Glutamine amidotransferase PurL</fullName>
    </alternativeName>
    <alternativeName>
        <fullName evidence="1">Phosphoribosylformylglycinamidine synthase subunit II</fullName>
    </alternativeName>
</protein>
<dbReference type="EC" id="6.3.5.3" evidence="1"/>
<dbReference type="EMBL" id="AE004437">
    <property type="protein sequence ID" value="AAG19309.1"/>
    <property type="molecule type" value="Genomic_DNA"/>
</dbReference>
<dbReference type="PIR" id="A84243">
    <property type="entry name" value="A84243"/>
</dbReference>
<dbReference type="RefSeq" id="WP_010902605.1">
    <property type="nucleotide sequence ID" value="NC_002607.1"/>
</dbReference>
<dbReference type="SMR" id="Q9HR49"/>
<dbReference type="FunCoup" id="Q9HR49">
    <property type="interactions" value="202"/>
</dbReference>
<dbReference type="STRING" id="64091.VNG_0864G"/>
<dbReference type="PaxDb" id="64091-VNG_0864G"/>
<dbReference type="GeneID" id="68693692"/>
<dbReference type="KEGG" id="hal:VNG_0864G"/>
<dbReference type="PATRIC" id="fig|64091.14.peg.661"/>
<dbReference type="HOGENOM" id="CLU_003100_0_1_2"/>
<dbReference type="InParanoid" id="Q9HR49"/>
<dbReference type="OrthoDB" id="8251at2157"/>
<dbReference type="PhylomeDB" id="Q9HR49"/>
<dbReference type="UniPathway" id="UPA00074">
    <property type="reaction ID" value="UER00128"/>
</dbReference>
<dbReference type="Proteomes" id="UP000000554">
    <property type="component" value="Chromosome"/>
</dbReference>
<dbReference type="GO" id="GO:0005737">
    <property type="term" value="C:cytoplasm"/>
    <property type="evidence" value="ECO:0007669"/>
    <property type="project" value="UniProtKB-SubCell"/>
</dbReference>
<dbReference type="GO" id="GO:0005524">
    <property type="term" value="F:ATP binding"/>
    <property type="evidence" value="ECO:0007669"/>
    <property type="project" value="UniProtKB-UniRule"/>
</dbReference>
<dbReference type="GO" id="GO:0000287">
    <property type="term" value="F:magnesium ion binding"/>
    <property type="evidence" value="ECO:0007669"/>
    <property type="project" value="UniProtKB-UniRule"/>
</dbReference>
<dbReference type="GO" id="GO:0004642">
    <property type="term" value="F:phosphoribosylformylglycinamidine synthase activity"/>
    <property type="evidence" value="ECO:0000318"/>
    <property type="project" value="GO_Central"/>
</dbReference>
<dbReference type="GO" id="GO:0006189">
    <property type="term" value="P:'de novo' IMP biosynthetic process"/>
    <property type="evidence" value="ECO:0007669"/>
    <property type="project" value="UniProtKB-UniRule"/>
</dbReference>
<dbReference type="GO" id="GO:0006164">
    <property type="term" value="P:purine nucleotide biosynthetic process"/>
    <property type="evidence" value="ECO:0000318"/>
    <property type="project" value="GO_Central"/>
</dbReference>
<dbReference type="CDD" id="cd02203">
    <property type="entry name" value="PurL_repeat1"/>
    <property type="match status" value="1"/>
</dbReference>
<dbReference type="CDD" id="cd02204">
    <property type="entry name" value="PurL_repeat2"/>
    <property type="match status" value="1"/>
</dbReference>
<dbReference type="Gene3D" id="3.90.650.10">
    <property type="entry name" value="PurM-like C-terminal domain"/>
    <property type="match status" value="2"/>
</dbReference>
<dbReference type="Gene3D" id="3.30.1330.10">
    <property type="entry name" value="PurM-like, N-terminal domain"/>
    <property type="match status" value="2"/>
</dbReference>
<dbReference type="HAMAP" id="MF_00420">
    <property type="entry name" value="PurL_2"/>
    <property type="match status" value="1"/>
</dbReference>
<dbReference type="InterPro" id="IPR010074">
    <property type="entry name" value="PRibForGlyAmidine_synth_PurL"/>
</dbReference>
<dbReference type="InterPro" id="IPR041609">
    <property type="entry name" value="PurL_linker"/>
</dbReference>
<dbReference type="InterPro" id="IPR010918">
    <property type="entry name" value="PurM-like_C_dom"/>
</dbReference>
<dbReference type="InterPro" id="IPR036676">
    <property type="entry name" value="PurM-like_C_sf"/>
</dbReference>
<dbReference type="InterPro" id="IPR016188">
    <property type="entry name" value="PurM-like_N"/>
</dbReference>
<dbReference type="InterPro" id="IPR036921">
    <property type="entry name" value="PurM-like_N_sf"/>
</dbReference>
<dbReference type="NCBIfam" id="TIGR01736">
    <property type="entry name" value="FGAM_synth_II"/>
    <property type="match status" value="1"/>
</dbReference>
<dbReference type="NCBIfam" id="NF002290">
    <property type="entry name" value="PRK01213.1"/>
    <property type="match status" value="1"/>
</dbReference>
<dbReference type="PANTHER" id="PTHR43555">
    <property type="entry name" value="PHOSPHORIBOSYLFORMYLGLYCINAMIDINE SYNTHASE SUBUNIT PURL"/>
    <property type="match status" value="1"/>
</dbReference>
<dbReference type="PANTHER" id="PTHR43555:SF1">
    <property type="entry name" value="PHOSPHORIBOSYLFORMYLGLYCINAMIDINE SYNTHASE SUBUNIT PURL"/>
    <property type="match status" value="1"/>
</dbReference>
<dbReference type="Pfam" id="PF00586">
    <property type="entry name" value="AIRS"/>
    <property type="match status" value="2"/>
</dbReference>
<dbReference type="Pfam" id="PF02769">
    <property type="entry name" value="AIRS_C"/>
    <property type="match status" value="2"/>
</dbReference>
<dbReference type="Pfam" id="PF18072">
    <property type="entry name" value="FGAR-AT_linker"/>
    <property type="match status" value="1"/>
</dbReference>
<dbReference type="PIRSF" id="PIRSF001587">
    <property type="entry name" value="FGAM_synthase_II"/>
    <property type="match status" value="1"/>
</dbReference>
<dbReference type="SUPFAM" id="SSF56042">
    <property type="entry name" value="PurM C-terminal domain-like"/>
    <property type="match status" value="2"/>
</dbReference>
<dbReference type="SUPFAM" id="SSF55326">
    <property type="entry name" value="PurM N-terminal domain-like"/>
    <property type="match status" value="2"/>
</dbReference>
<comment type="function">
    <text evidence="1">Part of the phosphoribosylformylglycinamidine synthase complex involved in the purines biosynthetic pathway. Catalyzes the ATP-dependent conversion of formylglycinamide ribonucleotide (FGAR) and glutamine to yield formylglycinamidine ribonucleotide (FGAM) and glutamate. The FGAM synthase complex is composed of three subunits. PurQ produces an ammonia molecule by converting glutamine to glutamate. PurL transfers the ammonia molecule to FGAR to form FGAM in an ATP-dependent manner. PurS interacts with PurQ and PurL and is thought to assist in the transfer of the ammonia molecule from PurQ to PurL.</text>
</comment>
<comment type="catalytic activity">
    <reaction evidence="1">
        <text>N(2)-formyl-N(1)-(5-phospho-beta-D-ribosyl)glycinamide + L-glutamine + ATP + H2O = 2-formamido-N(1)-(5-O-phospho-beta-D-ribosyl)acetamidine + L-glutamate + ADP + phosphate + H(+)</text>
        <dbReference type="Rhea" id="RHEA:17129"/>
        <dbReference type="ChEBI" id="CHEBI:15377"/>
        <dbReference type="ChEBI" id="CHEBI:15378"/>
        <dbReference type="ChEBI" id="CHEBI:29985"/>
        <dbReference type="ChEBI" id="CHEBI:30616"/>
        <dbReference type="ChEBI" id="CHEBI:43474"/>
        <dbReference type="ChEBI" id="CHEBI:58359"/>
        <dbReference type="ChEBI" id="CHEBI:147286"/>
        <dbReference type="ChEBI" id="CHEBI:147287"/>
        <dbReference type="ChEBI" id="CHEBI:456216"/>
        <dbReference type="EC" id="6.3.5.3"/>
    </reaction>
</comment>
<comment type="pathway">
    <text evidence="1">Purine metabolism; IMP biosynthesis via de novo pathway; 5-amino-1-(5-phospho-D-ribosyl)imidazole from N(2)-formyl-N(1)-(5-phospho-D-ribosyl)glycinamide: step 1/2.</text>
</comment>
<comment type="subunit">
    <text evidence="1">Monomer. Part of the FGAM synthase complex composed of 1 PurL, 1 PurQ and 2 PurS subunits.</text>
</comment>
<comment type="subcellular location">
    <subcellularLocation>
        <location evidence="1">Cytoplasm</location>
    </subcellularLocation>
</comment>
<comment type="similarity">
    <text evidence="1">Belongs to the FGAMS family.</text>
</comment>